<sequence>MFRMLSSSFEDDPFFADSFLAHRESMRNMMRSFSEPLGRDLLSISDGRGRTHNRRERDDGEDSLTHADVNPFQTMDRMMANMRSGIQELQRNFGQLSMDPNGHSFCSSSVMTYSKVGDEPPKVFQASTQTRRAPGGVKETRKAMRDSDSGLERMAVGHHIHDRGHVIRKSKNNKTGDEEVNQEFINMNESDAHAFDDEWQNEVLKYKSIGRSGNTGMRSVGHEHPGSRELKRREKIHRNSAIESGRRSNVFVDKLNVKGSPVKITKK</sequence>
<protein>
    <recommendedName>
        <fullName>Myeloid leukemia factor 1</fullName>
    </recommendedName>
    <alternativeName>
        <fullName>Hematopoietic lineage switch 7</fullName>
    </alternativeName>
    <alternativeName>
        <fullName>Myelodysplasia-myeloid leukemia factor 1</fullName>
    </alternativeName>
</protein>
<reference key="1">
    <citation type="journal article" date="1999" name="Am. J. Pathol.">
        <title>cDNA cloning, expression pattern, and chromosomal localization of Mlf1, murine homologue of a gene involved in myelodysplasia and acute myeloid leukemia.</title>
        <authorList>
            <person name="Hitzler J.K."/>
            <person name="Witte D.P."/>
            <person name="Jenkins N.A."/>
            <person name="Copeland N.G."/>
            <person name="Gilbert D.J."/>
            <person name="Naeve C.W."/>
            <person name="Look A.T."/>
            <person name="Morris S.W."/>
        </authorList>
    </citation>
    <scope>NUCLEOTIDE SEQUENCE [MRNA]</scope>
    <scope>TISSUE SPECIFICITY</scope>
    <source>
        <tissue>Testis</tissue>
    </source>
</reference>
<reference key="2">
    <citation type="journal article" date="1999" name="EMBO J.">
        <title>HLS7, a hemopoietic lineage switch gene homologous to the leukemia-inducing gene MLF1.</title>
        <authorList>
            <person name="Williams J.H."/>
            <person name="Daly L.N."/>
            <person name="Ingley E."/>
            <person name="Beaumont J.G."/>
            <person name="Tilbrook P.A."/>
            <person name="Lalonde J.-P."/>
            <person name="Stillitano J.P."/>
            <person name="Klinken S.P."/>
        </authorList>
    </citation>
    <scope>NUCLEOTIDE SEQUENCE [MRNA]</scope>
    <scope>FUNCTION</scope>
    <scope>SUBCELLULAR LOCATION</scope>
    <source>
        <tissue>Embryo</tissue>
    </source>
</reference>
<reference key="3">
    <citation type="journal article" date="2002" name="J. Biol. Chem.">
        <title>MADM, a novel adaptor protein that mediates phosphorylation of the 14-3-3 binding site of myeloid leukemia factor 1.</title>
        <authorList>
            <person name="Lim R."/>
            <person name="Winteringham L.N."/>
            <person name="Williams J.H."/>
            <person name="McCulloch R.K."/>
            <person name="Ingley E."/>
            <person name="Tiao J.Y.-H."/>
            <person name="Lalonde J.-P."/>
            <person name="Tsai S."/>
            <person name="Tilbrook P.A."/>
            <person name="Sun Y."/>
            <person name="Wu X."/>
            <person name="Morris S.W."/>
            <person name="Klinken S.P."/>
        </authorList>
    </citation>
    <scope>INTERACTION WITH NRBP1 AND YWHAZ</scope>
    <scope>SUBCELLULAR LOCATION</scope>
    <scope>PHOSPHORYLATION</scope>
</reference>
<reference key="4">
    <citation type="journal article" date="2004" name="Oncogene">
        <title>Myeloid leukemia factor 1 inhibits erythropoietin-induced differentiation, cell cycle exit and p27Kip1 accumulation.</title>
        <authorList>
            <person name="Winteringham L.N."/>
            <person name="Kobelke S."/>
            <person name="Williams J.H."/>
            <person name="Ingley E."/>
            <person name="Klinken S.P."/>
        </authorList>
    </citation>
    <scope>FUNCTION</scope>
</reference>
<reference key="5">
    <citation type="journal article" date="2006" name="J. Biol. Chem.">
        <title>Myeloid leukemia factor 1 associates with a novel heterogeneous nuclear ribonucleoprotein U-like molecule.</title>
        <authorList>
            <person name="Winteringham L.N."/>
            <person name="Endersby R."/>
            <person name="Kobelke S."/>
            <person name="McCulloch R.K."/>
            <person name="Williams J.H."/>
            <person name="Stillitano J."/>
            <person name="Cornwall S.M."/>
            <person name="Ingley E."/>
            <person name="Klinken S.P."/>
        </authorList>
    </citation>
    <scope>INTERACTION WITH HNRPUL2 AND YWHAZ</scope>
    <scope>SUBCELLULAR LOCATION</scope>
    <scope>MUTAGENESIS OF SER-34 AND SER-149</scope>
</reference>
<reference key="6">
    <citation type="journal article" date="2010" name="Cell">
        <title>A tissue-specific atlas of mouse protein phosphorylation and expression.</title>
        <authorList>
            <person name="Huttlin E.L."/>
            <person name="Jedrychowski M.P."/>
            <person name="Elias J.E."/>
            <person name="Goswami T."/>
            <person name="Rad R."/>
            <person name="Beausoleil S.A."/>
            <person name="Villen J."/>
            <person name="Haas W."/>
            <person name="Sowa M.E."/>
            <person name="Gygi S.P."/>
        </authorList>
    </citation>
    <scope>PHOSPHORYLATION [LARGE SCALE ANALYSIS] AT SER-6</scope>
    <scope>IDENTIFICATION BY MASS SPECTROMETRY [LARGE SCALE ANALYSIS]</scope>
    <source>
        <tissue>Brain</tissue>
        <tissue>Heart</tissue>
        <tissue>Testis</tissue>
    </source>
</reference>
<reference key="7">
    <citation type="journal article" date="2017" name="Dev. Biol.">
        <title>Identification of FOXJ1 effectors during ciliogenesis in the foetal respiratory epithelium and embryonic left-right organiser of the mouse.</title>
        <authorList>
            <person name="Stauber M."/>
            <person name="Weidemann M."/>
            <person name="Dittrich-Breiholz O."/>
            <person name="Lobschat K."/>
            <person name="Alten L."/>
            <person name="Mai M."/>
            <person name="Beckers A."/>
            <person name="Kracht M."/>
            <person name="Gossler A."/>
        </authorList>
    </citation>
    <scope>SUBCELLULAR LOCATION</scope>
    <scope>INDUCTION</scope>
</reference>
<keyword id="KW-0131">Cell cycle</keyword>
<keyword id="KW-0966">Cell projection</keyword>
<keyword id="KW-0963">Cytoplasm</keyword>
<keyword id="KW-0206">Cytoskeleton</keyword>
<keyword id="KW-0217">Developmental protein</keyword>
<keyword id="KW-0221">Differentiation</keyword>
<keyword id="KW-0238">DNA-binding</keyword>
<keyword id="KW-0539">Nucleus</keyword>
<keyword id="KW-0597">Phosphoprotein</keyword>
<keyword id="KW-1185">Reference proteome</keyword>
<accession>Q9QWV4</accession>
<accession>O70217</accession>
<organism>
    <name type="scientific">Mus musculus</name>
    <name type="common">Mouse</name>
    <dbReference type="NCBI Taxonomy" id="10090"/>
    <lineage>
        <taxon>Eukaryota</taxon>
        <taxon>Metazoa</taxon>
        <taxon>Chordata</taxon>
        <taxon>Craniata</taxon>
        <taxon>Vertebrata</taxon>
        <taxon>Euteleostomi</taxon>
        <taxon>Mammalia</taxon>
        <taxon>Eutheria</taxon>
        <taxon>Euarchontoglires</taxon>
        <taxon>Glires</taxon>
        <taxon>Rodentia</taxon>
        <taxon>Myomorpha</taxon>
        <taxon>Muroidea</taxon>
        <taxon>Muridae</taxon>
        <taxon>Murinae</taxon>
        <taxon>Mus</taxon>
        <taxon>Mus</taxon>
    </lineage>
</organism>
<dbReference type="EMBL" id="AF100171">
    <property type="protein sequence ID" value="AAD02876.1"/>
    <property type="molecule type" value="mRNA"/>
</dbReference>
<dbReference type="EMBL" id="AF009515">
    <property type="protein sequence ID" value="AAC17946.1"/>
    <property type="molecule type" value="mRNA"/>
</dbReference>
<dbReference type="CCDS" id="CCDS17396.1"/>
<dbReference type="RefSeq" id="NP_034931.2">
    <property type="nucleotide sequence ID" value="NM_010801.3"/>
</dbReference>
<dbReference type="BioGRID" id="201434">
    <property type="interactions" value="3"/>
</dbReference>
<dbReference type="FunCoup" id="Q9QWV4">
    <property type="interactions" value="182"/>
</dbReference>
<dbReference type="IntAct" id="Q9QWV4">
    <property type="interactions" value="6"/>
</dbReference>
<dbReference type="MINT" id="Q9QWV4"/>
<dbReference type="STRING" id="10090.ENSMUSP00000058596"/>
<dbReference type="MoonDB" id="Q9QWV4">
    <property type="type" value="Predicted"/>
</dbReference>
<dbReference type="iPTMnet" id="Q9QWV4"/>
<dbReference type="PhosphoSitePlus" id="Q9QWV4"/>
<dbReference type="PaxDb" id="10090-ENSMUSP00000058596"/>
<dbReference type="ProteomicsDB" id="295956"/>
<dbReference type="Antibodypedia" id="18436">
    <property type="antibodies" value="580 antibodies from 34 providers"/>
</dbReference>
<dbReference type="DNASU" id="17349"/>
<dbReference type="Ensembl" id="ENSMUST00000077916.12">
    <property type="protein sequence ID" value="ENSMUSP00000077072.6"/>
    <property type="gene ID" value="ENSMUSG00000048416.16"/>
</dbReference>
<dbReference type="GeneID" id="17349"/>
<dbReference type="KEGG" id="mmu:17349"/>
<dbReference type="UCSC" id="uc008pll.1">
    <property type="organism name" value="mouse"/>
</dbReference>
<dbReference type="AGR" id="MGI:1341819"/>
<dbReference type="CTD" id="4291"/>
<dbReference type="MGI" id="MGI:1341819">
    <property type="gene designation" value="Mlf1"/>
</dbReference>
<dbReference type="VEuPathDB" id="HostDB:ENSMUSG00000048416"/>
<dbReference type="eggNOG" id="KOG4049">
    <property type="taxonomic scope" value="Eukaryota"/>
</dbReference>
<dbReference type="GeneTree" id="ENSGT00390000005023"/>
<dbReference type="HOGENOM" id="CLU_063313_0_1_1"/>
<dbReference type="InParanoid" id="Q9QWV4"/>
<dbReference type="OrthoDB" id="8707547at2759"/>
<dbReference type="PhylomeDB" id="Q9QWV4"/>
<dbReference type="BioGRID-ORCS" id="17349">
    <property type="hits" value="4 hits in 79 CRISPR screens"/>
</dbReference>
<dbReference type="ChiTaRS" id="Mlf1">
    <property type="organism name" value="mouse"/>
</dbReference>
<dbReference type="PRO" id="PR:Q9QWV4"/>
<dbReference type="Proteomes" id="UP000000589">
    <property type="component" value="Chromosome 3"/>
</dbReference>
<dbReference type="RNAct" id="Q9QWV4">
    <property type="molecule type" value="protein"/>
</dbReference>
<dbReference type="Bgee" id="ENSMUSG00000048416">
    <property type="expression patterns" value="Expressed in spermatid and 171 other cell types or tissues"/>
</dbReference>
<dbReference type="ExpressionAtlas" id="Q9QWV4">
    <property type="expression patterns" value="baseline and differential"/>
</dbReference>
<dbReference type="GO" id="GO:0036064">
    <property type="term" value="C:ciliary basal body"/>
    <property type="evidence" value="ECO:0000314"/>
    <property type="project" value="UniProtKB"/>
</dbReference>
<dbReference type="GO" id="GO:0097546">
    <property type="term" value="C:ciliary base"/>
    <property type="evidence" value="ECO:0000314"/>
    <property type="project" value="MGI"/>
</dbReference>
<dbReference type="GO" id="GO:0005929">
    <property type="term" value="C:cilium"/>
    <property type="evidence" value="ECO:0000314"/>
    <property type="project" value="UniProtKB"/>
</dbReference>
<dbReference type="GO" id="GO:0005737">
    <property type="term" value="C:cytoplasm"/>
    <property type="evidence" value="ECO:0000314"/>
    <property type="project" value="UniProtKB"/>
</dbReference>
<dbReference type="GO" id="GO:0031514">
    <property type="term" value="C:motile cilium"/>
    <property type="evidence" value="ECO:0000314"/>
    <property type="project" value="MGI"/>
</dbReference>
<dbReference type="GO" id="GO:0097730">
    <property type="term" value="C:non-motile cilium"/>
    <property type="evidence" value="ECO:0000314"/>
    <property type="project" value="MGI"/>
</dbReference>
<dbReference type="GO" id="GO:0005634">
    <property type="term" value="C:nucleus"/>
    <property type="evidence" value="ECO:0000314"/>
    <property type="project" value="UniProtKB"/>
</dbReference>
<dbReference type="GO" id="GO:0003677">
    <property type="term" value="F:DNA binding"/>
    <property type="evidence" value="ECO:0000314"/>
    <property type="project" value="UniProtKB"/>
</dbReference>
<dbReference type="GO" id="GO:0006351">
    <property type="term" value="P:DNA-templated transcription"/>
    <property type="evidence" value="ECO:0000314"/>
    <property type="project" value="UniProtKB"/>
</dbReference>
<dbReference type="GO" id="GO:0002318">
    <property type="term" value="P:myeloid progenitor cell differentiation"/>
    <property type="evidence" value="ECO:0000314"/>
    <property type="project" value="UniProtKB"/>
</dbReference>
<dbReference type="GO" id="GO:1902806">
    <property type="term" value="P:regulation of cell cycle G1/S phase transition"/>
    <property type="evidence" value="ECO:0000250"/>
    <property type="project" value="UniProtKB"/>
</dbReference>
<dbReference type="InterPro" id="IPR019376">
    <property type="entry name" value="Myeloid_leukemia_factor"/>
</dbReference>
<dbReference type="PANTHER" id="PTHR13105">
    <property type="entry name" value="MYELOID LEUKEMIA FACTOR"/>
    <property type="match status" value="1"/>
</dbReference>
<dbReference type="Pfam" id="PF10248">
    <property type="entry name" value="Mlf1IP"/>
    <property type="match status" value="1"/>
</dbReference>
<feature type="chain" id="PRO_0000220753" description="Myeloid leukemia factor 1">
    <location>
        <begin position="1"/>
        <end position="267"/>
    </location>
</feature>
<feature type="region of interest" description="Disordered" evidence="3">
    <location>
        <begin position="39"/>
        <end position="67"/>
    </location>
</feature>
<feature type="region of interest" description="Interaction with COPS3" evidence="1">
    <location>
        <begin position="50"/>
        <end position="125"/>
    </location>
</feature>
<feature type="modified residue" description="Phosphoserine" evidence="11">
    <location>
        <position position="6"/>
    </location>
</feature>
<feature type="modified residue" description="Phosphoserine" evidence="2">
    <location>
        <position position="8"/>
    </location>
</feature>
<feature type="modified residue" description="Phosphoserine" evidence="2">
    <location>
        <position position="32"/>
    </location>
</feature>
<feature type="modified residue" description="Phosphoserine" evidence="2">
    <location>
        <position position="34"/>
    </location>
</feature>
<feature type="mutagenesis site" description="70% reduction in binding to YWHAZ and increased nuclear localization." evidence="8">
    <original>S</original>
    <variation>A</variation>
    <location>
        <position position="34"/>
    </location>
</feature>
<feature type="mutagenesis site" description="No effect on binding to YWHAZ." evidence="8">
    <original>S</original>
    <variation>A</variation>
    <location>
        <position position="149"/>
    </location>
</feature>
<feature type="sequence conflict" description="In Ref. 2; AAC17946." evidence="10" ref="2">
    <original>N</original>
    <variation>Y</variation>
    <location>
        <position position="172"/>
    </location>
</feature>
<feature type="sequence conflict" description="In Ref. 2; AAC17946." evidence="10" ref="2">
    <original>N</original>
    <variation>H</variation>
    <location>
        <position position="214"/>
    </location>
</feature>
<name>MLF1_MOUSE</name>
<evidence type="ECO:0000250" key="1"/>
<evidence type="ECO:0000250" key="2">
    <source>
        <dbReference type="UniProtKB" id="P58340"/>
    </source>
</evidence>
<evidence type="ECO:0000256" key="3">
    <source>
        <dbReference type="SAM" id="MobiDB-lite"/>
    </source>
</evidence>
<evidence type="ECO:0000269" key="4">
    <source>
    </source>
</evidence>
<evidence type="ECO:0000269" key="5">
    <source>
    </source>
</evidence>
<evidence type="ECO:0000269" key="6">
    <source>
    </source>
</evidence>
<evidence type="ECO:0000269" key="7">
    <source>
    </source>
</evidence>
<evidence type="ECO:0000269" key="8">
    <source>
    </source>
</evidence>
<evidence type="ECO:0000269" key="9">
    <source>
    </source>
</evidence>
<evidence type="ECO:0000305" key="10"/>
<evidence type="ECO:0007744" key="11">
    <source>
    </source>
</evidence>
<proteinExistence type="evidence at protein level"/>
<gene>
    <name type="primary">Mlf1</name>
    <name type="synonym">Hls7</name>
</gene>
<comment type="function">
    <text evidence="5 7">Involved in lineage commitment of primary hemopoietic progenitors by restricting erythroid formation and enhancing myeloid formation. Interferes with erythropoietin-induced erythroid terminal differentiation by preventing cells from exiting the cell cycle through suppression of CDKN1B/p27Kip1 levels. Suppresses COP1 activity via CSN3 which activates p53 and induces cell cycle arrest. Binds DNA and affects the expression of a number of genes so may function as a transcription factor in the nucleus.</text>
</comment>
<comment type="subunit">
    <text evidence="1 6 8">Interacts with CENPU (By similarity). Also interacts with NRBP1/MADM, YWHAZ/14-3-3-zeta and HNRPUL2/MANP. NRBP1 recruits a serine kinase which phosphorylates both itself and MLF1. Phosphorylated MLF1 then binds to YWHAZ and is retained in the cytoplasm. Retained in the nucleus by binding to HNRPUL2. Binds to COPS3/CSN3 which is required for suppression of COP1 and activation of p53.</text>
</comment>
<comment type="interaction">
    <interactant intactId="EBI-354765">
        <id>Q9QWV4</id>
    </interactant>
    <interactant intactId="EBI-767484">
        <id>Q99J45</id>
        <label>Nrbp1</label>
    </interactant>
    <organismsDiffer>false</organismsDiffer>
    <experiments>5</experiments>
</comment>
<comment type="interaction">
    <interactant intactId="EBI-354765">
        <id>Q9QWV4</id>
    </interactant>
    <interactant intactId="EBI-354751">
        <id>P63101</id>
        <label>Ywhaz</label>
    </interactant>
    <organismsDiffer>false</organismsDiffer>
    <experiments>3</experiments>
</comment>
<comment type="subcellular location">
    <subcellularLocation>
        <location evidence="5">Cytoplasm</location>
    </subcellularLocation>
    <subcellularLocation>
        <location evidence="5">Nucleus</location>
    </subcellularLocation>
    <subcellularLocation>
        <location evidence="9">Cell projection</location>
        <location evidence="9">Cilium</location>
    </subcellularLocation>
    <subcellularLocation>
        <location evidence="9">Cytoplasm</location>
        <location evidence="9">Cytoskeleton</location>
        <location evidence="9">Cilium basal body</location>
    </subcellularLocation>
    <text evidence="8">Shuttles between the cytoplasm and nucleus.</text>
</comment>
<comment type="tissue specificity">
    <text evidence="4">Highly expressed in skeletal muscle, heart, testis. Also found in lung, but not in spleen, thymus, bone marrow, liver and kidney.</text>
</comment>
<comment type="induction">
    <text evidence="9">Expression is activated by FOXJ1.</text>
</comment>
<comment type="PTM">
    <text evidence="6">Phosphorylation is required for binding to YWHAZ.</text>
</comment>
<comment type="similarity">
    <text evidence="10">Belongs to the MLF family.</text>
</comment>